<gene>
    <name type="primary">yggN</name>
    <name type="ordered locus">c3544</name>
</gene>
<accession>P0ADT0</accession>
<accession>P46143</accession>
<organism>
    <name type="scientific">Escherichia coli O6:H1 (strain CFT073 / ATCC 700928 / UPEC)</name>
    <dbReference type="NCBI Taxonomy" id="199310"/>
    <lineage>
        <taxon>Bacteria</taxon>
        <taxon>Pseudomonadati</taxon>
        <taxon>Pseudomonadota</taxon>
        <taxon>Gammaproteobacteria</taxon>
        <taxon>Enterobacterales</taxon>
        <taxon>Enterobacteriaceae</taxon>
        <taxon>Escherichia</taxon>
    </lineage>
</organism>
<keyword id="KW-1185">Reference proteome</keyword>
<proteinExistence type="predicted"/>
<name>YGGN_ECOL6</name>
<reference key="1">
    <citation type="journal article" date="2002" name="Proc. Natl. Acad. Sci. U.S.A.">
        <title>Extensive mosaic structure revealed by the complete genome sequence of uropathogenic Escherichia coli.</title>
        <authorList>
            <person name="Welch R.A."/>
            <person name="Burland V."/>
            <person name="Plunkett G. III"/>
            <person name="Redford P."/>
            <person name="Roesch P."/>
            <person name="Rasko D."/>
            <person name="Buckles E.L."/>
            <person name="Liou S.-R."/>
            <person name="Boutin A."/>
            <person name="Hackett J."/>
            <person name="Stroud D."/>
            <person name="Mayhew G.F."/>
            <person name="Rose D.J."/>
            <person name="Zhou S."/>
            <person name="Schwartz D.C."/>
            <person name="Perna N.T."/>
            <person name="Mobley H.L.T."/>
            <person name="Donnenberg M.S."/>
            <person name="Blattner F.R."/>
        </authorList>
    </citation>
    <scope>NUCLEOTIDE SEQUENCE [LARGE SCALE GENOMIC DNA]</scope>
    <source>
        <strain>CFT073 / ATCC 700928 / UPEC</strain>
    </source>
</reference>
<protein>
    <recommendedName>
        <fullName>Uncharacterized protein YggN</fullName>
    </recommendedName>
</protein>
<feature type="chain" id="PRO_0000169373" description="Uncharacterized protein YggN">
    <location>
        <begin position="1"/>
        <end position="239"/>
    </location>
</feature>
<dbReference type="EMBL" id="AE014075">
    <property type="protein sequence ID" value="AAN81992.1"/>
    <property type="molecule type" value="Genomic_DNA"/>
</dbReference>
<dbReference type="RefSeq" id="WP_000984796.1">
    <property type="nucleotide sequence ID" value="NZ_CP051263.1"/>
</dbReference>
<dbReference type="SMR" id="P0ADT0"/>
<dbReference type="STRING" id="199310.c3544"/>
<dbReference type="KEGG" id="ecc:c3544"/>
<dbReference type="eggNOG" id="ENOG502Z7J1">
    <property type="taxonomic scope" value="Bacteria"/>
</dbReference>
<dbReference type="HOGENOM" id="CLU_1159649_0_0_6"/>
<dbReference type="BioCyc" id="ECOL199310:C3544-MONOMER"/>
<dbReference type="Proteomes" id="UP000001410">
    <property type="component" value="Chromosome"/>
</dbReference>
<dbReference type="InterPro" id="IPR021307">
    <property type="entry name" value="DUF2884"/>
</dbReference>
<dbReference type="NCBIfam" id="NF007913">
    <property type="entry name" value="PRK10626.1"/>
    <property type="match status" value="1"/>
</dbReference>
<dbReference type="Pfam" id="PF11101">
    <property type="entry name" value="DUF2884"/>
    <property type="match status" value="1"/>
</dbReference>
<sequence length="239" mass="26429">MMRKMLLAAALSVTAMTAHADYQCSVTPRDDVIVSPQTVQVKGENGNLVITPDGNVMYNGKQYSLNAAQREQAKDYQAELRSTLPWIDEGAKSRVEKARIALDKIIVQEMGESSKMRSRLTKLDAQLKEQMNRIIETRSDGLTFHYKAIDQVRAEGQQLVNQAMGGILQDSINEMGAKAVLKSGGNPLQNVLGSLGGLQSSIQTEWKKQEKDFQQFGKDVCSRVVTLEDSRKALVGNLK</sequence>